<reference key="1">
    <citation type="journal article" date="2010" name="PLoS ONE">
        <title>Genome sequence of Cronobacter sakazakii BAA-894 and comparative genomic hybridization analysis with other Cronobacter species.</title>
        <authorList>
            <person name="Kucerova E."/>
            <person name="Clifton S.W."/>
            <person name="Xia X.Q."/>
            <person name="Long F."/>
            <person name="Porwollik S."/>
            <person name="Fulton L."/>
            <person name="Fronick C."/>
            <person name="Minx P."/>
            <person name="Kyung K."/>
            <person name="Warren W."/>
            <person name="Fulton R."/>
            <person name="Feng D."/>
            <person name="Wollam A."/>
            <person name="Shah N."/>
            <person name="Bhonagiri V."/>
            <person name="Nash W.E."/>
            <person name="Hallsworth-Pepin K."/>
            <person name="Wilson R.K."/>
            <person name="McClelland M."/>
            <person name="Forsythe S.J."/>
        </authorList>
    </citation>
    <scope>NUCLEOTIDE SEQUENCE [LARGE SCALE GENOMIC DNA]</scope>
    <source>
        <strain>ATCC BAA-894</strain>
    </source>
</reference>
<feature type="chain" id="PRO_1000026325" description="Phosphoenolpyruvate carboxykinase (ATP)">
    <location>
        <begin position="1"/>
        <end position="539"/>
    </location>
</feature>
<feature type="binding site" evidence="1">
    <location>
        <position position="64"/>
    </location>
    <ligand>
        <name>substrate</name>
    </ligand>
</feature>
<feature type="binding site" evidence="1">
    <location>
        <position position="206"/>
    </location>
    <ligand>
        <name>substrate</name>
    </ligand>
</feature>
<feature type="binding site" evidence="1">
    <location>
        <position position="212"/>
    </location>
    <ligand>
        <name>ATP</name>
        <dbReference type="ChEBI" id="CHEBI:30616"/>
    </ligand>
</feature>
<feature type="binding site" evidence="1">
    <location>
        <position position="212"/>
    </location>
    <ligand>
        <name>Mn(2+)</name>
        <dbReference type="ChEBI" id="CHEBI:29035"/>
    </ligand>
</feature>
<feature type="binding site" evidence="1">
    <location>
        <position position="212"/>
    </location>
    <ligand>
        <name>substrate</name>
    </ligand>
</feature>
<feature type="binding site" evidence="1">
    <location>
        <position position="231"/>
    </location>
    <ligand>
        <name>ATP</name>
        <dbReference type="ChEBI" id="CHEBI:30616"/>
    </ligand>
</feature>
<feature type="binding site" evidence="1">
    <location>
        <position position="231"/>
    </location>
    <ligand>
        <name>Mn(2+)</name>
        <dbReference type="ChEBI" id="CHEBI:29035"/>
    </ligand>
</feature>
<feature type="binding site" evidence="1">
    <location>
        <begin position="247"/>
        <end position="255"/>
    </location>
    <ligand>
        <name>ATP</name>
        <dbReference type="ChEBI" id="CHEBI:30616"/>
    </ligand>
</feature>
<feature type="binding site" evidence="1">
    <location>
        <position position="268"/>
    </location>
    <ligand>
        <name>Mn(2+)</name>
        <dbReference type="ChEBI" id="CHEBI:29035"/>
    </ligand>
</feature>
<feature type="binding site" evidence="1">
    <location>
        <position position="296"/>
    </location>
    <ligand>
        <name>ATP</name>
        <dbReference type="ChEBI" id="CHEBI:30616"/>
    </ligand>
</feature>
<feature type="binding site" evidence="1">
    <location>
        <position position="332"/>
    </location>
    <ligand>
        <name>ATP</name>
        <dbReference type="ChEBI" id="CHEBI:30616"/>
    </ligand>
</feature>
<feature type="binding site" evidence="1">
    <location>
        <position position="332"/>
    </location>
    <ligand>
        <name>substrate</name>
    </ligand>
</feature>
<feature type="binding site" evidence="1">
    <location>
        <begin position="448"/>
        <end position="449"/>
    </location>
    <ligand>
        <name>ATP</name>
        <dbReference type="ChEBI" id="CHEBI:30616"/>
    </ligand>
</feature>
<feature type="binding site" evidence="1">
    <location>
        <position position="454"/>
    </location>
    <ligand>
        <name>ATP</name>
        <dbReference type="ChEBI" id="CHEBI:30616"/>
    </ligand>
</feature>
<evidence type="ECO:0000255" key="1">
    <source>
        <dbReference type="HAMAP-Rule" id="MF_00453"/>
    </source>
</evidence>
<protein>
    <recommendedName>
        <fullName evidence="1">Phosphoenolpyruvate carboxykinase (ATP)</fullName>
        <shortName evidence="1">PCK</shortName>
        <shortName evidence="1">PEP carboxykinase</shortName>
        <shortName evidence="1">PEPCK</shortName>
        <ecNumber evidence="1">4.1.1.49</ecNumber>
    </recommendedName>
</protein>
<name>PCKA_CROS8</name>
<dbReference type="EC" id="4.1.1.49" evidence="1"/>
<dbReference type="EMBL" id="CP000783">
    <property type="protein sequence ID" value="ABU79515.1"/>
    <property type="molecule type" value="Genomic_DNA"/>
</dbReference>
<dbReference type="RefSeq" id="WP_012126385.1">
    <property type="nucleotide sequence ID" value="NC_009778.1"/>
</dbReference>
<dbReference type="SMR" id="A7MGC5"/>
<dbReference type="KEGG" id="esa:ESA_04336"/>
<dbReference type="PATRIC" id="fig|290339.8.peg.3862"/>
<dbReference type="HOGENOM" id="CLU_018247_0_1_6"/>
<dbReference type="UniPathway" id="UPA00138"/>
<dbReference type="Proteomes" id="UP000000260">
    <property type="component" value="Chromosome"/>
</dbReference>
<dbReference type="GO" id="GO:0005829">
    <property type="term" value="C:cytosol"/>
    <property type="evidence" value="ECO:0007669"/>
    <property type="project" value="TreeGrafter"/>
</dbReference>
<dbReference type="GO" id="GO:0005524">
    <property type="term" value="F:ATP binding"/>
    <property type="evidence" value="ECO:0007669"/>
    <property type="project" value="UniProtKB-UniRule"/>
</dbReference>
<dbReference type="GO" id="GO:0046872">
    <property type="term" value="F:metal ion binding"/>
    <property type="evidence" value="ECO:0007669"/>
    <property type="project" value="UniProtKB-KW"/>
</dbReference>
<dbReference type="GO" id="GO:0004612">
    <property type="term" value="F:phosphoenolpyruvate carboxykinase (ATP) activity"/>
    <property type="evidence" value="ECO:0007669"/>
    <property type="project" value="UniProtKB-UniRule"/>
</dbReference>
<dbReference type="GO" id="GO:0006094">
    <property type="term" value="P:gluconeogenesis"/>
    <property type="evidence" value="ECO:0007669"/>
    <property type="project" value="UniProtKB-UniRule"/>
</dbReference>
<dbReference type="CDD" id="cd00484">
    <property type="entry name" value="PEPCK_ATP"/>
    <property type="match status" value="1"/>
</dbReference>
<dbReference type="FunFam" id="2.170.8.10:FF:000001">
    <property type="entry name" value="Phosphoenolpyruvate carboxykinase (ATP)"/>
    <property type="match status" value="1"/>
</dbReference>
<dbReference type="FunFam" id="3.40.449.10:FF:000001">
    <property type="entry name" value="Phosphoenolpyruvate carboxykinase (ATP)"/>
    <property type="match status" value="1"/>
</dbReference>
<dbReference type="Gene3D" id="3.90.228.20">
    <property type="match status" value="1"/>
</dbReference>
<dbReference type="Gene3D" id="3.40.449.10">
    <property type="entry name" value="Phosphoenolpyruvate Carboxykinase, domain 1"/>
    <property type="match status" value="1"/>
</dbReference>
<dbReference type="Gene3D" id="2.170.8.10">
    <property type="entry name" value="Phosphoenolpyruvate Carboxykinase, domain 2"/>
    <property type="match status" value="1"/>
</dbReference>
<dbReference type="HAMAP" id="MF_00453">
    <property type="entry name" value="PEPCK_ATP"/>
    <property type="match status" value="1"/>
</dbReference>
<dbReference type="InterPro" id="IPR001272">
    <property type="entry name" value="PEP_carboxykinase_ATP"/>
</dbReference>
<dbReference type="InterPro" id="IPR013035">
    <property type="entry name" value="PEP_carboxykinase_C"/>
</dbReference>
<dbReference type="InterPro" id="IPR008210">
    <property type="entry name" value="PEP_carboxykinase_N"/>
</dbReference>
<dbReference type="InterPro" id="IPR015994">
    <property type="entry name" value="PEPCK_ATP_CS"/>
</dbReference>
<dbReference type="NCBIfam" id="TIGR00224">
    <property type="entry name" value="pckA"/>
    <property type="match status" value="1"/>
</dbReference>
<dbReference type="NCBIfam" id="NF006819">
    <property type="entry name" value="PRK09344.1-1"/>
    <property type="match status" value="1"/>
</dbReference>
<dbReference type="NCBIfam" id="NF006820">
    <property type="entry name" value="PRK09344.1-2"/>
    <property type="match status" value="1"/>
</dbReference>
<dbReference type="NCBIfam" id="NF006821">
    <property type="entry name" value="PRK09344.1-3"/>
    <property type="match status" value="1"/>
</dbReference>
<dbReference type="PANTHER" id="PTHR30031:SF0">
    <property type="entry name" value="PHOSPHOENOLPYRUVATE CARBOXYKINASE (ATP)"/>
    <property type="match status" value="1"/>
</dbReference>
<dbReference type="PANTHER" id="PTHR30031">
    <property type="entry name" value="PHOSPHOENOLPYRUVATE CARBOXYKINASE ATP"/>
    <property type="match status" value="1"/>
</dbReference>
<dbReference type="Pfam" id="PF01293">
    <property type="entry name" value="PEPCK_ATP"/>
    <property type="match status" value="1"/>
</dbReference>
<dbReference type="PIRSF" id="PIRSF006294">
    <property type="entry name" value="PEP_crbxkin"/>
    <property type="match status" value="1"/>
</dbReference>
<dbReference type="SUPFAM" id="SSF68923">
    <property type="entry name" value="PEP carboxykinase N-terminal domain"/>
    <property type="match status" value="1"/>
</dbReference>
<dbReference type="SUPFAM" id="SSF53795">
    <property type="entry name" value="PEP carboxykinase-like"/>
    <property type="match status" value="1"/>
</dbReference>
<dbReference type="PROSITE" id="PS00532">
    <property type="entry name" value="PEPCK_ATP"/>
    <property type="match status" value="1"/>
</dbReference>
<proteinExistence type="inferred from homology"/>
<comment type="function">
    <text evidence="1">Involved in the gluconeogenesis. Catalyzes the conversion of oxaloacetate (OAA) to phosphoenolpyruvate (PEP) through direct phosphoryl transfer between the nucleoside triphosphate and OAA.</text>
</comment>
<comment type="catalytic activity">
    <reaction evidence="1">
        <text>oxaloacetate + ATP = phosphoenolpyruvate + ADP + CO2</text>
        <dbReference type="Rhea" id="RHEA:18617"/>
        <dbReference type="ChEBI" id="CHEBI:16452"/>
        <dbReference type="ChEBI" id="CHEBI:16526"/>
        <dbReference type="ChEBI" id="CHEBI:30616"/>
        <dbReference type="ChEBI" id="CHEBI:58702"/>
        <dbReference type="ChEBI" id="CHEBI:456216"/>
        <dbReference type="EC" id="4.1.1.49"/>
    </reaction>
</comment>
<comment type="cofactor">
    <cofactor evidence="1">
        <name>Mn(2+)</name>
        <dbReference type="ChEBI" id="CHEBI:29035"/>
    </cofactor>
    <text evidence="1">Binds 1 Mn(2+) ion per subunit.</text>
</comment>
<comment type="pathway">
    <text evidence="1">Carbohydrate biosynthesis; gluconeogenesis.</text>
</comment>
<comment type="subunit">
    <text evidence="1">Monomer.</text>
</comment>
<comment type="subcellular location">
    <subcellularLocation>
        <location evidence="1">Cytoplasm</location>
    </subcellularLocation>
</comment>
<comment type="similarity">
    <text evidence="1">Belongs to the phosphoenolpyruvate carboxykinase (ATP) family.</text>
</comment>
<keyword id="KW-0067">ATP-binding</keyword>
<keyword id="KW-0963">Cytoplasm</keyword>
<keyword id="KW-0210">Decarboxylase</keyword>
<keyword id="KW-0312">Gluconeogenesis</keyword>
<keyword id="KW-0456">Lyase</keyword>
<keyword id="KW-0464">Manganese</keyword>
<keyword id="KW-0479">Metal-binding</keyword>
<keyword id="KW-0547">Nucleotide-binding</keyword>
<keyword id="KW-1185">Reference proteome</keyword>
<sequence length="539" mass="59640">MRVTGITPQDLKAYGINDIQEVVYNPDYDTLYREELDPSLEGYERGVLTDLGAVAVDTGIFTGRSPKDKYIVRDDTTRDTLWWSDNGKGKNDNKPLTPETWQHLKGLVTQQLSGKRLFIIDAFCGANPDSRLSVRFITEVAWQAHFVKNMFIRPSDDELEGFEPDFIVMNGAKCTNPDWQAQGLNSENFVAFNLTERMQLIGGTWYGGEMKKGMFSIMNYLLPLKGIASMHCSANVGEKGDVAVFFGLSGTGKTTLSTDPKRRLIGDDEHGWDDDGVFNFEGGCYAKTIRLSEEAEPDIYHAIRRDALLENVTVRDDGSIDFDDASKTENTRVSYPIYHIDNIVKPVSKAGHATKVIFLTADAFGVLPPVSRLTASQTQYHFLSGFTAKLAGTERGVTEPTPTFSACFGAAFLMLHPTQYSEVLVKRMQAAGAQAYLVNTGWNGTGKRISIKDTRAIIDAILNGSLDDAETFTLPLFNLAIPTSLPGVDERILDPRNTYASPEQWQEKAQQLAQLFISNFEKYTDTPAGAALVSAGPQR</sequence>
<organism>
    <name type="scientific">Cronobacter sakazakii (strain ATCC BAA-894)</name>
    <name type="common">Enterobacter sakazakii</name>
    <dbReference type="NCBI Taxonomy" id="290339"/>
    <lineage>
        <taxon>Bacteria</taxon>
        <taxon>Pseudomonadati</taxon>
        <taxon>Pseudomonadota</taxon>
        <taxon>Gammaproteobacteria</taxon>
        <taxon>Enterobacterales</taxon>
        <taxon>Enterobacteriaceae</taxon>
        <taxon>Cronobacter</taxon>
    </lineage>
</organism>
<gene>
    <name evidence="1" type="primary">pckA</name>
    <name type="ordered locus">ESA_04336</name>
</gene>
<accession>A7MGC5</accession>